<accession>Q75EY7</accession>
<keyword id="KW-0256">Endoplasmic reticulum</keyword>
<keyword id="KW-0337">GPI-anchor biosynthesis</keyword>
<keyword id="KW-0472">Membrane</keyword>
<keyword id="KW-1185">Reference proteome</keyword>
<keyword id="KW-0812">Transmembrane</keyword>
<keyword id="KW-1133">Transmembrane helix</keyword>
<reference key="1">
    <citation type="journal article" date="2004" name="Science">
        <title>The Ashbya gossypii genome as a tool for mapping the ancient Saccharomyces cerevisiae genome.</title>
        <authorList>
            <person name="Dietrich F.S."/>
            <person name="Voegeli S."/>
            <person name="Brachat S."/>
            <person name="Lerch A."/>
            <person name="Gates K."/>
            <person name="Steiner S."/>
            <person name="Mohr C."/>
            <person name="Poehlmann R."/>
            <person name="Luedi P."/>
            <person name="Choi S."/>
            <person name="Wing R.A."/>
            <person name="Flavier A."/>
            <person name="Gaffney T.D."/>
            <person name="Philippsen P."/>
        </authorList>
    </citation>
    <scope>NUCLEOTIDE SEQUENCE [LARGE SCALE GENOMIC DNA]</scope>
    <source>
        <strain>ATCC 10895 / CBS 109.51 / FGSC 9923 / NRRL Y-1056</strain>
    </source>
</reference>
<reference key="2">
    <citation type="journal article" date="2013" name="G3 (Bethesda)">
        <title>Genomes of Ashbya fungi isolated from insects reveal four mating-type loci, numerous translocations, lack of transposons, and distinct gene duplications.</title>
        <authorList>
            <person name="Dietrich F.S."/>
            <person name="Voegeli S."/>
            <person name="Kuo S."/>
            <person name="Philippsen P."/>
        </authorList>
    </citation>
    <scope>GENOME REANNOTATION</scope>
    <source>
        <strain>ATCC 10895 / CBS 109.51 / FGSC 9923 / NRRL Y-1056</strain>
    </source>
</reference>
<proteinExistence type="inferred from homology"/>
<feature type="chain" id="PRO_0000191761" description="Glycosylphosphatidylinositol anchor biosynthesis protein 11">
    <location>
        <begin position="1"/>
        <end position="217"/>
    </location>
</feature>
<feature type="transmembrane region" description="Helical" evidence="2">
    <location>
        <begin position="45"/>
        <end position="61"/>
    </location>
</feature>
<feature type="transmembrane region" description="Helical" evidence="2">
    <location>
        <begin position="74"/>
        <end position="94"/>
    </location>
</feature>
<feature type="transmembrane region" description="Helical" evidence="2">
    <location>
        <begin position="111"/>
        <end position="131"/>
    </location>
</feature>
<feature type="transmembrane region" description="Helical" evidence="2">
    <location>
        <begin position="138"/>
        <end position="158"/>
    </location>
</feature>
<feature type="transmembrane region" description="Helical" evidence="2">
    <location>
        <begin position="169"/>
        <end position="189"/>
    </location>
</feature>
<feature type="transmembrane region" description="Helical" evidence="2">
    <location>
        <begin position="195"/>
        <end position="215"/>
    </location>
</feature>
<dbReference type="EMBL" id="AE016814">
    <property type="protein sequence ID" value="AAS50307.1"/>
    <property type="molecule type" value="Genomic_DNA"/>
</dbReference>
<dbReference type="RefSeq" id="NP_982483.1">
    <property type="nucleotide sequence ID" value="NM_207836.1"/>
</dbReference>
<dbReference type="FunCoup" id="Q75EY7">
    <property type="interactions" value="159"/>
</dbReference>
<dbReference type="STRING" id="284811.Q75EY7"/>
<dbReference type="EnsemblFungi" id="AAS50307">
    <property type="protein sequence ID" value="AAS50307"/>
    <property type="gene ID" value="AGOS_AAL059W"/>
</dbReference>
<dbReference type="GeneID" id="4618509"/>
<dbReference type="KEGG" id="ago:AGOS_AAL059W"/>
<dbReference type="eggNOG" id="KOG3144">
    <property type="taxonomic scope" value="Eukaryota"/>
</dbReference>
<dbReference type="HOGENOM" id="CLU_111662_0_0_1"/>
<dbReference type="InParanoid" id="Q75EY7"/>
<dbReference type="OMA" id="FNCDFKV"/>
<dbReference type="OrthoDB" id="17366at2759"/>
<dbReference type="UniPathway" id="UPA00196"/>
<dbReference type="Proteomes" id="UP000000591">
    <property type="component" value="Chromosome I"/>
</dbReference>
<dbReference type="GO" id="GO:0005789">
    <property type="term" value="C:endoplasmic reticulum membrane"/>
    <property type="evidence" value="ECO:0007669"/>
    <property type="project" value="UniProtKB-SubCell"/>
</dbReference>
<dbReference type="GO" id="GO:0051377">
    <property type="term" value="F:mannose-ethanolamine phosphotransferase activity"/>
    <property type="evidence" value="ECO:0000318"/>
    <property type="project" value="GO_Central"/>
</dbReference>
<dbReference type="GO" id="GO:0006506">
    <property type="term" value="P:GPI anchor biosynthetic process"/>
    <property type="evidence" value="ECO:0000318"/>
    <property type="project" value="GO_Central"/>
</dbReference>
<dbReference type="InterPro" id="IPR009580">
    <property type="entry name" value="GPI_biosynthesis_protein_Pig-F"/>
</dbReference>
<dbReference type="Pfam" id="PF06699">
    <property type="entry name" value="PIG-F"/>
    <property type="match status" value="1"/>
</dbReference>
<sequence>MTTKKRPVGKKKFVSFSDDDALSRTGRLPKNLPQHGSPPVYVRRTWQTIPFHLIVLSYWFIKHSNGYDVRKCTWLLVPCQVLYLALQFNPATVYGNKILKLNYALLAVSGVTCILLTIPCMLLVVLFGAPFLEMLDKTWLLSLHCCVLSYPAVYSVLNSDFKVGFFKKYFISIAVGCWISCLAIPLDWDRPWQEWPIPLVVGAQLGAMFGYTFCSQL</sequence>
<comment type="function">
    <text evidence="1">Acts in the GPI biosynthetic pathway between GlcNAc-PI synthesis and GPI transfer to protein.</text>
</comment>
<comment type="pathway">
    <text>Glycolipid biosynthesis; glycosylphosphatidylinositol-anchor biosynthesis.</text>
</comment>
<comment type="subcellular location">
    <subcellularLocation>
        <location evidence="1">Endoplasmic reticulum membrane</location>
        <topology evidence="1">Multi-pass membrane protein</topology>
    </subcellularLocation>
</comment>
<comment type="similarity">
    <text evidence="3">Belongs to the PIGF family.</text>
</comment>
<organism>
    <name type="scientific">Eremothecium gossypii (strain ATCC 10895 / CBS 109.51 / FGSC 9923 / NRRL Y-1056)</name>
    <name type="common">Yeast</name>
    <name type="synonym">Ashbya gossypii</name>
    <dbReference type="NCBI Taxonomy" id="284811"/>
    <lineage>
        <taxon>Eukaryota</taxon>
        <taxon>Fungi</taxon>
        <taxon>Dikarya</taxon>
        <taxon>Ascomycota</taxon>
        <taxon>Saccharomycotina</taxon>
        <taxon>Saccharomycetes</taxon>
        <taxon>Saccharomycetales</taxon>
        <taxon>Saccharomycetaceae</taxon>
        <taxon>Eremothecium</taxon>
    </lineage>
</organism>
<name>GPI11_EREGS</name>
<protein>
    <recommendedName>
        <fullName>Glycosylphosphatidylinositol anchor biosynthesis protein 11</fullName>
    </recommendedName>
</protein>
<evidence type="ECO:0000250" key="1"/>
<evidence type="ECO:0000255" key="2"/>
<evidence type="ECO:0000305" key="3"/>
<gene>
    <name type="primary">GPI11</name>
    <name type="ordered locus">AAL059W</name>
</gene>